<evidence type="ECO:0000255" key="1">
    <source>
        <dbReference type="HAMAP-Rule" id="MF_01545"/>
    </source>
</evidence>
<reference key="1">
    <citation type="submission" date="2009-10" db="EMBL/GenBank/DDBJ databases">
        <title>Complete sequence of Pectobacterium wasabiae WPP163.</title>
        <authorList>
            <consortium name="US DOE Joint Genome Institute"/>
            <person name="Lucas S."/>
            <person name="Copeland A."/>
            <person name="Lapidus A."/>
            <person name="Glavina del Rio T."/>
            <person name="Tice H."/>
            <person name="Bruce D."/>
            <person name="Goodwin L."/>
            <person name="Pitluck S."/>
            <person name="Chertkov O."/>
            <person name="Brettin T."/>
            <person name="Detter J.C."/>
            <person name="Han C."/>
            <person name="Larimer F."/>
            <person name="Land M."/>
            <person name="Hauser L."/>
            <person name="Kyrpides N."/>
            <person name="Ovchinnikova G."/>
            <person name="Balakrishnan V."/>
            <person name="Glasner J."/>
            <person name="Perna N.T."/>
        </authorList>
    </citation>
    <scope>NUCLEOTIDE SEQUENCE [LARGE SCALE GENOMIC DNA]</scope>
    <source>
        <strain>WPP163</strain>
    </source>
</reference>
<comment type="function">
    <text evidence="1">Forms an efflux pump with AaeA. Could function as a metabolic relief valve, allowing to eliminate certain compounds when they accumulate to high levels in the cell.</text>
</comment>
<comment type="subcellular location">
    <subcellularLocation>
        <location evidence="1">Cell inner membrane</location>
        <topology evidence="1">Multi-pass membrane protein</topology>
    </subcellularLocation>
</comment>
<comment type="similarity">
    <text evidence="1">Belongs to the aromatic acid exporter ArAE (TC 2.A.85) family.</text>
</comment>
<proteinExistence type="inferred from homology"/>
<dbReference type="EMBL" id="CP001790">
    <property type="protein sequence ID" value="ACX86126.1"/>
    <property type="molecule type" value="Genomic_DNA"/>
</dbReference>
<dbReference type="RefSeq" id="WP_012822084.1">
    <property type="nucleotide sequence ID" value="NC_013421.1"/>
</dbReference>
<dbReference type="SMR" id="D0KEK2"/>
<dbReference type="KEGG" id="pwa:Pecwa_0273"/>
<dbReference type="eggNOG" id="COG1289">
    <property type="taxonomic scope" value="Bacteria"/>
</dbReference>
<dbReference type="HOGENOM" id="CLU_027647_0_0_6"/>
<dbReference type="GO" id="GO:0005886">
    <property type="term" value="C:plasma membrane"/>
    <property type="evidence" value="ECO:0007669"/>
    <property type="project" value="UniProtKB-SubCell"/>
</dbReference>
<dbReference type="GO" id="GO:0022857">
    <property type="term" value="F:transmembrane transporter activity"/>
    <property type="evidence" value="ECO:0007669"/>
    <property type="project" value="UniProtKB-UniRule"/>
</dbReference>
<dbReference type="GO" id="GO:0046942">
    <property type="term" value="P:carboxylic acid transport"/>
    <property type="evidence" value="ECO:0007669"/>
    <property type="project" value="InterPro"/>
</dbReference>
<dbReference type="HAMAP" id="MF_01545">
    <property type="entry name" value="AaeB"/>
    <property type="match status" value="1"/>
</dbReference>
<dbReference type="InterPro" id="IPR006726">
    <property type="entry name" value="PHBA_efflux_AaeB/fusaric-R"/>
</dbReference>
<dbReference type="InterPro" id="IPR023706">
    <property type="entry name" value="PHBA_efflux_pump_AaeB"/>
</dbReference>
<dbReference type="NCBIfam" id="NF007916">
    <property type="entry name" value="PRK10631.1"/>
    <property type="match status" value="1"/>
</dbReference>
<dbReference type="PANTHER" id="PTHR30509:SF9">
    <property type="entry name" value="MULTIDRUG RESISTANCE PROTEIN MDTO"/>
    <property type="match status" value="1"/>
</dbReference>
<dbReference type="PANTHER" id="PTHR30509">
    <property type="entry name" value="P-HYDROXYBENZOIC ACID EFFLUX PUMP SUBUNIT-RELATED"/>
    <property type="match status" value="1"/>
</dbReference>
<dbReference type="Pfam" id="PF04632">
    <property type="entry name" value="FUSC"/>
    <property type="match status" value="1"/>
</dbReference>
<protein>
    <recommendedName>
        <fullName evidence="1">p-hydroxybenzoic acid efflux pump subunit AaeB</fullName>
        <shortName evidence="1">pHBA efflux pump protein B</shortName>
    </recommendedName>
</protein>
<sequence length="662" mass="73394">MKTSLLADPLFFTTPQLARFRFAFKLTFAVVLSLFLGFHLQLGTPNTAVMTAAIVAGGPAFVAGGEPFSGAIRHRGMLRIVGTFIGCIGALAIIISTIRAPIVMMLLCCIWAGLCNWISSLVKIENSYIFGLAGYTTLIIILATQGTPMLTPQFAVERCSEIVLGIACVIFADLLFAPRSIKQDVDRSLRELMVGQYRLLQLSMSGADEGTIDTTWHALVRKTTALDGMRSNLMMESSRWQNSNRRLTSLHTQSLTMITQACETYLTLQDVPTHVKSSLKQVLDPPVESFGDVHHHVKALRHLIAADSRDVPPTLVSWVGAATRYLLLVKGVQTNGRISKIEADVLNHDVEIKVPSAETHHAMINGLRTGVATALGCLFWLSTGWSSGGICMMMIAVVTSLAMRLPNPKMVGMDFLYGTIYSLPLGALMFMFILPSTQQSILLLCLSLGAMTFFLGVEVQKRRLGSLGALISTINVLLLNNPMTFNISLFLDNAIGQIIGCFVALMVILLIRDNTKSHTGRTLLNRFVYGAVSALTTDTTRRKENHLPALYQQLFLLLNRFPDDMAKYRLALWMIIMHQRLRTLDIPQNAALSAFHRQIRATAEQVILARRDTTRSRYFTQLLEELERYQQILTEQQLPPNVTVPVGRLTGILRDYQHALSD</sequence>
<feature type="chain" id="PRO_0000414005" description="p-hydroxybenzoic acid efflux pump subunit AaeB">
    <location>
        <begin position="1"/>
        <end position="662"/>
    </location>
</feature>
<feature type="transmembrane region" description="Helical" evidence="1">
    <location>
        <begin position="22"/>
        <end position="42"/>
    </location>
</feature>
<feature type="transmembrane region" description="Helical" evidence="1">
    <location>
        <begin position="52"/>
        <end position="72"/>
    </location>
</feature>
<feature type="transmembrane region" description="Helical" evidence="1">
    <location>
        <begin position="78"/>
        <end position="98"/>
    </location>
</feature>
<feature type="transmembrane region" description="Helical" evidence="1">
    <location>
        <begin position="102"/>
        <end position="122"/>
    </location>
</feature>
<feature type="transmembrane region" description="Helical" evidence="1">
    <location>
        <begin position="129"/>
        <end position="149"/>
    </location>
</feature>
<feature type="transmembrane region" description="Helical" evidence="1">
    <location>
        <begin position="161"/>
        <end position="181"/>
    </location>
</feature>
<feature type="transmembrane region" description="Helical" evidence="1">
    <location>
        <begin position="378"/>
        <end position="398"/>
    </location>
</feature>
<feature type="transmembrane region" description="Helical" evidence="1">
    <location>
        <begin position="415"/>
        <end position="435"/>
    </location>
</feature>
<feature type="transmembrane region" description="Helical" evidence="1">
    <location>
        <begin position="439"/>
        <end position="459"/>
    </location>
</feature>
<feature type="transmembrane region" description="Helical" evidence="1">
    <location>
        <begin position="467"/>
        <end position="487"/>
    </location>
</feature>
<feature type="transmembrane region" description="Helical" evidence="1">
    <location>
        <begin position="491"/>
        <end position="511"/>
    </location>
</feature>
<keyword id="KW-0997">Cell inner membrane</keyword>
<keyword id="KW-1003">Cell membrane</keyword>
<keyword id="KW-0472">Membrane</keyword>
<keyword id="KW-0812">Transmembrane</keyword>
<keyword id="KW-1133">Transmembrane helix</keyword>
<keyword id="KW-0813">Transport</keyword>
<name>AAEB_PECPW</name>
<accession>D0KEK2</accession>
<organism>
    <name type="scientific">Pectobacterium parmentieri (strain WPP163)</name>
    <name type="common">Pectobacterium wasabiae (strain WPP163)</name>
    <dbReference type="NCBI Taxonomy" id="561231"/>
    <lineage>
        <taxon>Bacteria</taxon>
        <taxon>Pseudomonadati</taxon>
        <taxon>Pseudomonadota</taxon>
        <taxon>Gammaproteobacteria</taxon>
        <taxon>Enterobacterales</taxon>
        <taxon>Pectobacteriaceae</taxon>
        <taxon>Pectobacterium</taxon>
    </lineage>
</organism>
<gene>
    <name evidence="1" type="primary">aaeB</name>
    <name type="ordered locus">Pecwa_0273</name>
</gene>